<keyword id="KW-1185">Reference proteome</keyword>
<name>Y7509_DICDI</name>
<proteinExistence type="predicted"/>
<protein>
    <recommendedName>
        <fullName>Uncharacterized protein DDB_G0275137</fullName>
    </recommendedName>
</protein>
<reference key="1">
    <citation type="journal article" date="2002" name="Nature">
        <title>Sequence and analysis of chromosome 2 of Dictyostelium discoideum.</title>
        <authorList>
            <person name="Gloeckner G."/>
            <person name="Eichinger L."/>
            <person name="Szafranski K."/>
            <person name="Pachebat J.A."/>
            <person name="Bankier A.T."/>
            <person name="Dear P.H."/>
            <person name="Lehmann R."/>
            <person name="Baumgart C."/>
            <person name="Parra G."/>
            <person name="Abril J.F."/>
            <person name="Guigo R."/>
            <person name="Kumpf K."/>
            <person name="Tunggal B."/>
            <person name="Cox E.C."/>
            <person name="Quail M.A."/>
            <person name="Platzer M."/>
            <person name="Rosenthal A."/>
            <person name="Noegel A.A."/>
        </authorList>
    </citation>
    <scope>NUCLEOTIDE SEQUENCE [LARGE SCALE GENOMIC DNA]</scope>
    <source>
        <strain>AX4</strain>
    </source>
</reference>
<reference key="2">
    <citation type="journal article" date="2005" name="Nature">
        <title>The genome of the social amoeba Dictyostelium discoideum.</title>
        <authorList>
            <person name="Eichinger L."/>
            <person name="Pachebat J.A."/>
            <person name="Gloeckner G."/>
            <person name="Rajandream M.A."/>
            <person name="Sucgang R."/>
            <person name="Berriman M."/>
            <person name="Song J."/>
            <person name="Olsen R."/>
            <person name="Szafranski K."/>
            <person name="Xu Q."/>
            <person name="Tunggal B."/>
            <person name="Kummerfeld S."/>
            <person name="Madera M."/>
            <person name="Konfortov B.A."/>
            <person name="Rivero F."/>
            <person name="Bankier A.T."/>
            <person name="Lehmann R."/>
            <person name="Hamlin N."/>
            <person name="Davies R."/>
            <person name="Gaudet P."/>
            <person name="Fey P."/>
            <person name="Pilcher K."/>
            <person name="Chen G."/>
            <person name="Saunders D."/>
            <person name="Sodergren E.J."/>
            <person name="Davis P."/>
            <person name="Kerhornou A."/>
            <person name="Nie X."/>
            <person name="Hall N."/>
            <person name="Anjard C."/>
            <person name="Hemphill L."/>
            <person name="Bason N."/>
            <person name="Farbrother P."/>
            <person name="Desany B."/>
            <person name="Just E."/>
            <person name="Morio T."/>
            <person name="Rost R."/>
            <person name="Churcher C.M."/>
            <person name="Cooper J."/>
            <person name="Haydock S."/>
            <person name="van Driessche N."/>
            <person name="Cronin A."/>
            <person name="Goodhead I."/>
            <person name="Muzny D.M."/>
            <person name="Mourier T."/>
            <person name="Pain A."/>
            <person name="Lu M."/>
            <person name="Harper D."/>
            <person name="Lindsay R."/>
            <person name="Hauser H."/>
            <person name="James K.D."/>
            <person name="Quiles M."/>
            <person name="Madan Babu M."/>
            <person name="Saito T."/>
            <person name="Buchrieser C."/>
            <person name="Wardroper A."/>
            <person name="Felder M."/>
            <person name="Thangavelu M."/>
            <person name="Johnson D."/>
            <person name="Knights A."/>
            <person name="Loulseged H."/>
            <person name="Mungall K.L."/>
            <person name="Oliver K."/>
            <person name="Price C."/>
            <person name="Quail M.A."/>
            <person name="Urushihara H."/>
            <person name="Hernandez J."/>
            <person name="Rabbinowitsch E."/>
            <person name="Steffen D."/>
            <person name="Sanders M."/>
            <person name="Ma J."/>
            <person name="Kohara Y."/>
            <person name="Sharp S."/>
            <person name="Simmonds M.N."/>
            <person name="Spiegler S."/>
            <person name="Tivey A."/>
            <person name="Sugano S."/>
            <person name="White B."/>
            <person name="Walker D."/>
            <person name="Woodward J.R."/>
            <person name="Winckler T."/>
            <person name="Tanaka Y."/>
            <person name="Shaulsky G."/>
            <person name="Schleicher M."/>
            <person name="Weinstock G.M."/>
            <person name="Rosenthal A."/>
            <person name="Cox E.C."/>
            <person name="Chisholm R.L."/>
            <person name="Gibbs R.A."/>
            <person name="Loomis W.F."/>
            <person name="Platzer M."/>
            <person name="Kay R.R."/>
            <person name="Williams J.G."/>
            <person name="Dear P.H."/>
            <person name="Noegel A.A."/>
            <person name="Barrell B.G."/>
            <person name="Kuspa A."/>
        </authorList>
    </citation>
    <scope>NUCLEOTIDE SEQUENCE [LARGE SCALE GENOMIC DNA]</scope>
    <source>
        <strain>AX4</strain>
    </source>
</reference>
<organism>
    <name type="scientific">Dictyostelium discoideum</name>
    <name type="common">Social amoeba</name>
    <dbReference type="NCBI Taxonomy" id="44689"/>
    <lineage>
        <taxon>Eukaryota</taxon>
        <taxon>Amoebozoa</taxon>
        <taxon>Evosea</taxon>
        <taxon>Eumycetozoa</taxon>
        <taxon>Dictyostelia</taxon>
        <taxon>Dictyosteliales</taxon>
        <taxon>Dictyosteliaceae</taxon>
        <taxon>Dictyostelium</taxon>
    </lineage>
</organism>
<dbReference type="EMBL" id="AAFI02000013">
    <property type="protein sequence ID" value="EAL69849.1"/>
    <property type="molecule type" value="Genomic_DNA"/>
</dbReference>
<dbReference type="RefSeq" id="XP_643717.1">
    <property type="nucleotide sequence ID" value="XM_638625.1"/>
</dbReference>
<dbReference type="PaxDb" id="44689-DDB0167509"/>
<dbReference type="EnsemblProtists" id="EAL69849">
    <property type="protein sequence ID" value="EAL69849"/>
    <property type="gene ID" value="DDB_G0275137"/>
</dbReference>
<dbReference type="GeneID" id="8619757"/>
<dbReference type="KEGG" id="ddi:DDB_G0275137"/>
<dbReference type="dictyBase" id="DDB_G0275137"/>
<dbReference type="HOGENOM" id="CLU_2965684_0_0_1"/>
<dbReference type="InParanoid" id="Q8T2Q8"/>
<dbReference type="PRO" id="PR:Q8T2Q8"/>
<dbReference type="Proteomes" id="UP000002195">
    <property type="component" value="Chromosome 2"/>
</dbReference>
<feature type="chain" id="PRO_0000348128" description="Uncharacterized protein DDB_G0275137">
    <location>
        <begin position="1"/>
        <end position="59"/>
    </location>
</feature>
<accession>Q8T2Q8</accession>
<accession>Q554J4</accession>
<gene>
    <name type="ORF">DDB_G0275137</name>
</gene>
<sequence length="59" mass="6756">MLFKSINQVININGYNKLNNNFNHQNNDLTSISYSQNSLSSSVKASAVFTRPQMFWTNL</sequence>